<dbReference type="EMBL" id="BC053231">
    <property type="protein sequence ID" value="AAH53231.1"/>
    <property type="molecule type" value="mRNA"/>
</dbReference>
<dbReference type="RefSeq" id="NP_997886.1">
    <property type="nucleotide sequence ID" value="NM_212721.1"/>
</dbReference>
<dbReference type="FunCoup" id="Q7T370">
    <property type="interactions" value="1554"/>
</dbReference>
<dbReference type="STRING" id="7955.ENSDARP00000031228"/>
<dbReference type="PaxDb" id="7955-ENSDARP00000031228"/>
<dbReference type="Ensembl" id="ENSDART00000036204">
    <property type="protein sequence ID" value="ENSDARP00000031228"/>
    <property type="gene ID" value="ENSDARG00000023028"/>
</dbReference>
<dbReference type="GeneID" id="334102"/>
<dbReference type="KEGG" id="dre:334102"/>
<dbReference type="AGR" id="ZFIN:ZDB-GENE-030131-6034"/>
<dbReference type="CTD" id="55573"/>
<dbReference type="ZFIN" id="ZDB-GENE-030131-6034">
    <property type="gene designation" value="cdv3"/>
</dbReference>
<dbReference type="eggNOG" id="ENOG502QRFT">
    <property type="taxonomic scope" value="Eukaryota"/>
</dbReference>
<dbReference type="HOGENOM" id="CLU_089760_1_0_1"/>
<dbReference type="InParanoid" id="Q7T370"/>
<dbReference type="OMA" id="TSGPWNK"/>
<dbReference type="OrthoDB" id="6288097at2759"/>
<dbReference type="PhylomeDB" id="Q7T370"/>
<dbReference type="TreeFam" id="TF315891"/>
<dbReference type="PRO" id="PR:Q7T370"/>
<dbReference type="Proteomes" id="UP000000437">
    <property type="component" value="Chromosome 24"/>
</dbReference>
<dbReference type="Bgee" id="ENSDARG00000023028">
    <property type="expression patterns" value="Expressed in somite and 34 other cell types or tissues"/>
</dbReference>
<dbReference type="GO" id="GO:0005737">
    <property type="term" value="C:cytoplasm"/>
    <property type="evidence" value="ECO:0000318"/>
    <property type="project" value="GO_Central"/>
</dbReference>
<dbReference type="InterPro" id="IPR026806">
    <property type="entry name" value="CDV3"/>
</dbReference>
<dbReference type="PANTHER" id="PTHR16284">
    <property type="entry name" value="PROTEIN CDV3 HOMOLOG"/>
    <property type="match status" value="1"/>
</dbReference>
<dbReference type="PANTHER" id="PTHR16284:SF13">
    <property type="entry name" value="PROTEIN CDV3 HOMOLOG"/>
    <property type="match status" value="1"/>
</dbReference>
<dbReference type="Pfam" id="PF15359">
    <property type="entry name" value="CDV3"/>
    <property type="match status" value="1"/>
</dbReference>
<organism>
    <name type="scientific">Danio rerio</name>
    <name type="common">Zebrafish</name>
    <name type="synonym">Brachydanio rerio</name>
    <dbReference type="NCBI Taxonomy" id="7955"/>
    <lineage>
        <taxon>Eukaryota</taxon>
        <taxon>Metazoa</taxon>
        <taxon>Chordata</taxon>
        <taxon>Craniata</taxon>
        <taxon>Vertebrata</taxon>
        <taxon>Euteleostomi</taxon>
        <taxon>Actinopterygii</taxon>
        <taxon>Neopterygii</taxon>
        <taxon>Teleostei</taxon>
        <taxon>Ostariophysi</taxon>
        <taxon>Cypriniformes</taxon>
        <taxon>Danionidae</taxon>
        <taxon>Danioninae</taxon>
        <taxon>Danio</taxon>
    </lineage>
</organism>
<comment type="subcellular location">
    <subcellularLocation>
        <location evidence="1">Cytoplasm</location>
    </subcellularLocation>
</comment>
<comment type="similarity">
    <text evidence="3">Belongs to the CDV3 family.</text>
</comment>
<reference key="1">
    <citation type="submission" date="2003-06" db="EMBL/GenBank/DDBJ databases">
        <authorList>
            <consortium name="NIH - Zebrafish Gene Collection (ZGC) project"/>
        </authorList>
    </citation>
    <scope>NUCLEOTIDE SEQUENCE [LARGE SCALE MRNA]</scope>
    <source>
        <tissue>Kidney</tissue>
    </source>
</reference>
<feature type="initiator methionine" description="Removed" evidence="1">
    <location>
        <position position="1"/>
    </location>
</feature>
<feature type="chain" id="PRO_0000299564" description="Protein CDV3 homolog">
    <location>
        <begin position="2"/>
        <end position="236"/>
    </location>
</feature>
<feature type="region of interest" description="Disordered" evidence="2">
    <location>
        <begin position="1"/>
        <end position="75"/>
    </location>
</feature>
<feature type="region of interest" description="Disordered" evidence="2">
    <location>
        <begin position="92"/>
        <end position="111"/>
    </location>
</feature>
<feature type="region of interest" description="Disordered" evidence="2">
    <location>
        <begin position="120"/>
        <end position="181"/>
    </location>
</feature>
<feature type="region of interest" description="Disordered" evidence="2">
    <location>
        <begin position="209"/>
        <end position="236"/>
    </location>
</feature>
<feature type="compositionally biased region" description="Basic residues" evidence="2">
    <location>
        <begin position="20"/>
        <end position="29"/>
    </location>
</feature>
<feature type="compositionally biased region" description="Low complexity" evidence="2">
    <location>
        <begin position="34"/>
        <end position="46"/>
    </location>
</feature>
<feature type="compositionally biased region" description="Basic and acidic residues" evidence="2">
    <location>
        <begin position="51"/>
        <end position="67"/>
    </location>
</feature>
<feature type="compositionally biased region" description="Acidic residues" evidence="2">
    <location>
        <begin position="96"/>
        <end position="111"/>
    </location>
</feature>
<feature type="compositionally biased region" description="Low complexity" evidence="2">
    <location>
        <begin position="127"/>
        <end position="140"/>
    </location>
</feature>
<feature type="modified residue" description="N-acetylalanine" evidence="1">
    <location>
        <position position="2"/>
    </location>
</feature>
<protein>
    <recommendedName>
        <fullName>Protein CDV3 homolog</fullName>
    </recommendedName>
</protein>
<sequence>MADVAPAGVEKSLDDFFAKRDKKKKKEKGKGKEQVTGAAAAAAMPVKKMKKEKEKSTKSENQDAQMEKEDEEWKEFEQKEVDYTGLRLQAMQMSDEKEEEEYEKEEVGEDGEIILVTSDKMSGPWNKSGGAPPSAASAPVEEVEVPEPKAPGVYRPPGARLTTTKKAPAQGPPEIFSDAQFPSLLSTARHVETRKDREMEKTFEVVKHKSRVREGEGPGSMQQLQLDNQYAILGDK</sequence>
<accession>Q7T370</accession>
<gene>
    <name type="primary">cdv3</name>
</gene>
<proteinExistence type="evidence at transcript level"/>
<evidence type="ECO:0000250" key="1"/>
<evidence type="ECO:0000256" key="2">
    <source>
        <dbReference type="SAM" id="MobiDB-lite"/>
    </source>
</evidence>
<evidence type="ECO:0000305" key="3"/>
<keyword id="KW-0007">Acetylation</keyword>
<keyword id="KW-0963">Cytoplasm</keyword>
<keyword id="KW-1185">Reference proteome</keyword>
<name>CDV3_DANRE</name>